<organism>
    <name type="scientific">Aquifex aeolicus (strain VF5)</name>
    <dbReference type="NCBI Taxonomy" id="224324"/>
    <lineage>
        <taxon>Bacteria</taxon>
        <taxon>Pseudomonadati</taxon>
        <taxon>Aquificota</taxon>
        <taxon>Aquificia</taxon>
        <taxon>Aquificales</taxon>
        <taxon>Aquificaceae</taxon>
        <taxon>Aquifex</taxon>
    </lineage>
</organism>
<reference key="1">
    <citation type="journal article" date="1998" name="Nature">
        <title>The complete genome of the hyperthermophilic bacterium Aquifex aeolicus.</title>
        <authorList>
            <person name="Deckert G."/>
            <person name="Warren P.V."/>
            <person name="Gaasterland T."/>
            <person name="Young W.G."/>
            <person name="Lenox A.L."/>
            <person name="Graham D.E."/>
            <person name="Overbeek R."/>
            <person name="Snead M.A."/>
            <person name="Keller M."/>
            <person name="Aujay M."/>
            <person name="Huber R."/>
            <person name="Feldman R.A."/>
            <person name="Short J.M."/>
            <person name="Olsen G.J."/>
            <person name="Swanson R.V."/>
        </authorList>
    </citation>
    <scope>NUCLEOTIDE SEQUENCE [LARGE SCALE GENOMIC DNA]</scope>
    <source>
        <strain>VF5</strain>
    </source>
</reference>
<comment type="function">
    <text evidence="1">Catalyzes the 2-thiolation of uridine at the wobble position (U34) of tRNA, leading to the formation of s(2)U34.</text>
</comment>
<comment type="catalytic activity">
    <reaction evidence="1">
        <text>S-sulfanyl-L-cysteinyl-[protein] + uridine(34) in tRNA + AH2 + ATP = 2-thiouridine(34) in tRNA + L-cysteinyl-[protein] + A + AMP + diphosphate + H(+)</text>
        <dbReference type="Rhea" id="RHEA:47032"/>
        <dbReference type="Rhea" id="RHEA-COMP:10131"/>
        <dbReference type="Rhea" id="RHEA-COMP:11726"/>
        <dbReference type="Rhea" id="RHEA-COMP:11727"/>
        <dbReference type="Rhea" id="RHEA-COMP:11728"/>
        <dbReference type="ChEBI" id="CHEBI:13193"/>
        <dbReference type="ChEBI" id="CHEBI:15378"/>
        <dbReference type="ChEBI" id="CHEBI:17499"/>
        <dbReference type="ChEBI" id="CHEBI:29950"/>
        <dbReference type="ChEBI" id="CHEBI:30616"/>
        <dbReference type="ChEBI" id="CHEBI:33019"/>
        <dbReference type="ChEBI" id="CHEBI:61963"/>
        <dbReference type="ChEBI" id="CHEBI:65315"/>
        <dbReference type="ChEBI" id="CHEBI:87170"/>
        <dbReference type="ChEBI" id="CHEBI:456215"/>
        <dbReference type="EC" id="2.8.1.13"/>
    </reaction>
</comment>
<comment type="subcellular location">
    <subcellularLocation>
        <location evidence="1">Cytoplasm</location>
    </subcellularLocation>
</comment>
<comment type="similarity">
    <text evidence="1">Belongs to the MnmA/TRMU family.</text>
</comment>
<feature type="chain" id="PRO_0000121601" description="tRNA-specific 2-thiouridylase MnmA">
    <location>
        <begin position="1"/>
        <end position="356"/>
    </location>
</feature>
<feature type="region of interest" description="Interaction with tRNA" evidence="1">
    <location>
        <begin position="150"/>
        <end position="152"/>
    </location>
</feature>
<feature type="region of interest" description="Interaction with tRNA" evidence="1">
    <location>
        <begin position="302"/>
        <end position="303"/>
    </location>
</feature>
<feature type="active site" description="Nucleophile" evidence="1">
    <location>
        <position position="102"/>
    </location>
</feature>
<feature type="active site" description="Cysteine persulfide intermediate" evidence="1">
    <location>
        <position position="200"/>
    </location>
</feature>
<feature type="binding site" evidence="1">
    <location>
        <begin position="6"/>
        <end position="13"/>
    </location>
    <ligand>
        <name>ATP</name>
        <dbReference type="ChEBI" id="CHEBI:30616"/>
    </ligand>
</feature>
<feature type="binding site" evidence="1">
    <location>
        <position position="32"/>
    </location>
    <ligand>
        <name>ATP</name>
        <dbReference type="ChEBI" id="CHEBI:30616"/>
    </ligand>
</feature>
<feature type="binding site" evidence="1">
    <location>
        <position position="127"/>
    </location>
    <ligand>
        <name>ATP</name>
        <dbReference type="ChEBI" id="CHEBI:30616"/>
    </ligand>
</feature>
<feature type="site" description="Interaction with tRNA" evidence="1">
    <location>
        <position position="128"/>
    </location>
</feature>
<feature type="site" description="Interaction with tRNA" evidence="1">
    <location>
        <position position="335"/>
    </location>
</feature>
<feature type="disulfide bond" description="Alternate" evidence="1">
    <location>
        <begin position="102"/>
        <end position="200"/>
    </location>
</feature>
<gene>
    <name evidence="1" type="primary">mnmA</name>
    <name type="synonym">trmU</name>
    <name type="ordered locus">aq_1224</name>
</gene>
<name>MNMA_AQUAE</name>
<evidence type="ECO:0000255" key="1">
    <source>
        <dbReference type="HAMAP-Rule" id="MF_00144"/>
    </source>
</evidence>
<accession>O67274</accession>
<protein>
    <recommendedName>
        <fullName evidence="1">tRNA-specific 2-thiouridylase MnmA</fullName>
        <ecNumber evidence="1">2.8.1.13</ecNumber>
    </recommendedName>
</protein>
<keyword id="KW-0067">ATP-binding</keyword>
<keyword id="KW-0963">Cytoplasm</keyword>
<keyword id="KW-1015">Disulfide bond</keyword>
<keyword id="KW-0547">Nucleotide-binding</keyword>
<keyword id="KW-1185">Reference proteome</keyword>
<keyword id="KW-0694">RNA-binding</keyword>
<keyword id="KW-0808">Transferase</keyword>
<keyword id="KW-0819">tRNA processing</keyword>
<keyword id="KW-0820">tRNA-binding</keyword>
<proteinExistence type="inferred from homology"/>
<sequence length="356" mass="40574">MRVAVGMSGGVDSSVTALLLKEQGHDVIRVTLRFHTVEACEVNETHNVCCSPKDVQDASRVAKRLGIPHLVFSWEEIFKSKVIDYFVEEYKRGRTPNPCALCNREVKTGFFARYLKQVADIDKLATGHYAKIEEDKKYGLVIKRPKDRKRDQTYFLSLVRREDLELLTFPLGAYTKEEVREIAKRYGLEVAQKRDSQEVCFLMGKSPGEYLEGILGKQRGLIKHVSGKVLGEHEGVYRYTIGQRRGLGISYGKPVYVIDIDAKTNTLIVGEEEYLYNDKLLVKEINFHVPLEKWENVSAQIRYRHKPVPVERIEKTEEGFLVKFKEDVRGITPGQVVAFYDGDVLLGGGIIEESVK</sequence>
<dbReference type="EC" id="2.8.1.13" evidence="1"/>
<dbReference type="EMBL" id="AE000657">
    <property type="protein sequence ID" value="AAC07238.1"/>
    <property type="molecule type" value="Genomic_DNA"/>
</dbReference>
<dbReference type="PIR" id="G70405">
    <property type="entry name" value="G70405"/>
</dbReference>
<dbReference type="RefSeq" id="NP_213838.1">
    <property type="nucleotide sequence ID" value="NC_000918.1"/>
</dbReference>
<dbReference type="RefSeq" id="WP_010880776.1">
    <property type="nucleotide sequence ID" value="NC_000918.1"/>
</dbReference>
<dbReference type="SMR" id="O67274"/>
<dbReference type="FunCoup" id="O67274">
    <property type="interactions" value="467"/>
</dbReference>
<dbReference type="STRING" id="224324.aq_1224"/>
<dbReference type="DNASU" id="1192620"/>
<dbReference type="EnsemblBacteria" id="AAC07238">
    <property type="protein sequence ID" value="AAC07238"/>
    <property type="gene ID" value="aq_1224"/>
</dbReference>
<dbReference type="KEGG" id="aae:aq_1224"/>
<dbReference type="PATRIC" id="fig|224324.8.peg.953"/>
<dbReference type="eggNOG" id="COG0482">
    <property type="taxonomic scope" value="Bacteria"/>
</dbReference>
<dbReference type="HOGENOM" id="CLU_035188_0_0_0"/>
<dbReference type="InParanoid" id="O67274"/>
<dbReference type="OrthoDB" id="9800696at2"/>
<dbReference type="Proteomes" id="UP000000798">
    <property type="component" value="Chromosome"/>
</dbReference>
<dbReference type="GO" id="GO:0005737">
    <property type="term" value="C:cytoplasm"/>
    <property type="evidence" value="ECO:0007669"/>
    <property type="project" value="UniProtKB-SubCell"/>
</dbReference>
<dbReference type="GO" id="GO:0005524">
    <property type="term" value="F:ATP binding"/>
    <property type="evidence" value="ECO:0007669"/>
    <property type="project" value="UniProtKB-KW"/>
</dbReference>
<dbReference type="GO" id="GO:0000049">
    <property type="term" value="F:tRNA binding"/>
    <property type="evidence" value="ECO:0007669"/>
    <property type="project" value="UniProtKB-KW"/>
</dbReference>
<dbReference type="GO" id="GO:0103016">
    <property type="term" value="F:tRNA-uridine 2-sulfurtransferase activity"/>
    <property type="evidence" value="ECO:0007669"/>
    <property type="project" value="UniProtKB-EC"/>
</dbReference>
<dbReference type="GO" id="GO:0002143">
    <property type="term" value="P:tRNA wobble position uridine thiolation"/>
    <property type="evidence" value="ECO:0000318"/>
    <property type="project" value="GO_Central"/>
</dbReference>
<dbReference type="CDD" id="cd01998">
    <property type="entry name" value="MnmA_TRMU-like"/>
    <property type="match status" value="1"/>
</dbReference>
<dbReference type="FunFam" id="2.30.30.280:FF:000001">
    <property type="entry name" value="tRNA-specific 2-thiouridylase MnmA"/>
    <property type="match status" value="1"/>
</dbReference>
<dbReference type="FunFam" id="2.40.30.10:FF:000023">
    <property type="entry name" value="tRNA-specific 2-thiouridylase MnmA"/>
    <property type="match status" value="1"/>
</dbReference>
<dbReference type="FunFam" id="3.40.50.620:FF:000302">
    <property type="entry name" value="tRNA-specific 2-thiouridylase MnmA"/>
    <property type="match status" value="1"/>
</dbReference>
<dbReference type="Gene3D" id="2.30.30.280">
    <property type="entry name" value="Adenine nucleotide alpha hydrolases-like domains"/>
    <property type="match status" value="1"/>
</dbReference>
<dbReference type="Gene3D" id="3.40.50.620">
    <property type="entry name" value="HUPs"/>
    <property type="match status" value="1"/>
</dbReference>
<dbReference type="Gene3D" id="2.40.30.10">
    <property type="entry name" value="Translation factors"/>
    <property type="match status" value="1"/>
</dbReference>
<dbReference type="HAMAP" id="MF_00144">
    <property type="entry name" value="tRNA_thiouridyl_MnmA"/>
    <property type="match status" value="1"/>
</dbReference>
<dbReference type="InterPro" id="IPR004506">
    <property type="entry name" value="MnmA-like"/>
</dbReference>
<dbReference type="InterPro" id="IPR046885">
    <property type="entry name" value="MnmA-like_C"/>
</dbReference>
<dbReference type="InterPro" id="IPR046884">
    <property type="entry name" value="MnmA-like_central"/>
</dbReference>
<dbReference type="InterPro" id="IPR023382">
    <property type="entry name" value="MnmA-like_central_sf"/>
</dbReference>
<dbReference type="InterPro" id="IPR014729">
    <property type="entry name" value="Rossmann-like_a/b/a_fold"/>
</dbReference>
<dbReference type="NCBIfam" id="NF001138">
    <property type="entry name" value="PRK00143.1"/>
    <property type="match status" value="1"/>
</dbReference>
<dbReference type="NCBIfam" id="TIGR00420">
    <property type="entry name" value="trmU"/>
    <property type="match status" value="1"/>
</dbReference>
<dbReference type="PANTHER" id="PTHR11933:SF5">
    <property type="entry name" value="MITOCHONDRIAL TRNA-SPECIFIC 2-THIOURIDYLASE 1"/>
    <property type="match status" value="1"/>
</dbReference>
<dbReference type="PANTHER" id="PTHR11933">
    <property type="entry name" value="TRNA 5-METHYLAMINOMETHYL-2-THIOURIDYLATE -METHYLTRANSFERASE"/>
    <property type="match status" value="1"/>
</dbReference>
<dbReference type="Pfam" id="PF03054">
    <property type="entry name" value="tRNA_Me_trans"/>
    <property type="match status" value="1"/>
</dbReference>
<dbReference type="Pfam" id="PF20258">
    <property type="entry name" value="tRNA_Me_trans_C"/>
    <property type="match status" value="1"/>
</dbReference>
<dbReference type="Pfam" id="PF20259">
    <property type="entry name" value="tRNA_Me_trans_M"/>
    <property type="match status" value="1"/>
</dbReference>
<dbReference type="SUPFAM" id="SSF52402">
    <property type="entry name" value="Adenine nucleotide alpha hydrolases-like"/>
    <property type="match status" value="1"/>
</dbReference>